<accession>A0KRF0</accession>
<comment type="function">
    <text evidence="1">Removes the pyruvyl group from chorismate, with concomitant aromatization of the ring, to provide 4-hydroxybenzoate (4HB) for the ubiquinone pathway.</text>
</comment>
<comment type="catalytic activity">
    <reaction evidence="1">
        <text>chorismate = 4-hydroxybenzoate + pyruvate</text>
        <dbReference type="Rhea" id="RHEA:16505"/>
        <dbReference type="ChEBI" id="CHEBI:15361"/>
        <dbReference type="ChEBI" id="CHEBI:17879"/>
        <dbReference type="ChEBI" id="CHEBI:29748"/>
        <dbReference type="EC" id="4.1.3.40"/>
    </reaction>
</comment>
<comment type="pathway">
    <text evidence="1">Cofactor biosynthesis; ubiquinone biosynthesis.</text>
</comment>
<comment type="subcellular location">
    <subcellularLocation>
        <location evidence="1">Cytoplasm</location>
    </subcellularLocation>
</comment>
<comment type="similarity">
    <text evidence="1">Belongs to the UbiC family.</text>
</comment>
<proteinExistence type="inferred from homology"/>
<evidence type="ECO:0000255" key="1">
    <source>
        <dbReference type="HAMAP-Rule" id="MF_01632"/>
    </source>
</evidence>
<reference key="1">
    <citation type="submission" date="2006-09" db="EMBL/GenBank/DDBJ databases">
        <title>Complete sequence of chromosome 1 of Shewanella sp. ANA-3.</title>
        <authorList>
            <person name="Copeland A."/>
            <person name="Lucas S."/>
            <person name="Lapidus A."/>
            <person name="Barry K."/>
            <person name="Detter J.C."/>
            <person name="Glavina del Rio T."/>
            <person name="Hammon N."/>
            <person name="Israni S."/>
            <person name="Dalin E."/>
            <person name="Tice H."/>
            <person name="Pitluck S."/>
            <person name="Chertkov O."/>
            <person name="Brettin T."/>
            <person name="Bruce D."/>
            <person name="Han C."/>
            <person name="Tapia R."/>
            <person name="Gilna P."/>
            <person name="Schmutz J."/>
            <person name="Larimer F."/>
            <person name="Land M."/>
            <person name="Hauser L."/>
            <person name="Kyrpides N."/>
            <person name="Kim E."/>
            <person name="Newman D."/>
            <person name="Salticov C."/>
            <person name="Konstantinidis K."/>
            <person name="Klappenback J."/>
            <person name="Tiedje J."/>
            <person name="Richardson P."/>
        </authorList>
    </citation>
    <scope>NUCLEOTIDE SEQUENCE [LARGE SCALE GENOMIC DNA]</scope>
    <source>
        <strain>ANA-3</strain>
    </source>
</reference>
<protein>
    <recommendedName>
        <fullName evidence="1">Probable chorismate pyruvate-lyase</fullName>
        <shortName evidence="1">CL</shortName>
        <shortName evidence="1">CPL</shortName>
        <ecNumber evidence="1">4.1.3.40</ecNumber>
    </recommendedName>
</protein>
<keyword id="KW-0963">Cytoplasm</keyword>
<keyword id="KW-0456">Lyase</keyword>
<keyword id="KW-0670">Pyruvate</keyword>
<keyword id="KW-0831">Ubiquinone biosynthesis</keyword>
<gene>
    <name evidence="1" type="primary">ubiC</name>
    <name type="ordered locus">Shewana3_0125</name>
</gene>
<dbReference type="EC" id="4.1.3.40" evidence="1"/>
<dbReference type="EMBL" id="CP000469">
    <property type="protein sequence ID" value="ABK46369.1"/>
    <property type="molecule type" value="Genomic_DNA"/>
</dbReference>
<dbReference type="RefSeq" id="WP_011715398.1">
    <property type="nucleotide sequence ID" value="NC_008577.1"/>
</dbReference>
<dbReference type="SMR" id="A0KRF0"/>
<dbReference type="STRING" id="94122.Shewana3_0125"/>
<dbReference type="KEGG" id="shn:Shewana3_0125"/>
<dbReference type="eggNOG" id="COG3161">
    <property type="taxonomic scope" value="Bacteria"/>
</dbReference>
<dbReference type="HOGENOM" id="CLU_096824_1_1_6"/>
<dbReference type="OrthoDB" id="9789493at2"/>
<dbReference type="UniPathway" id="UPA00232"/>
<dbReference type="Proteomes" id="UP000002589">
    <property type="component" value="Chromosome"/>
</dbReference>
<dbReference type="GO" id="GO:0005829">
    <property type="term" value="C:cytosol"/>
    <property type="evidence" value="ECO:0007669"/>
    <property type="project" value="TreeGrafter"/>
</dbReference>
<dbReference type="GO" id="GO:0008813">
    <property type="term" value="F:chorismate lyase activity"/>
    <property type="evidence" value="ECO:0007669"/>
    <property type="project" value="UniProtKB-UniRule"/>
</dbReference>
<dbReference type="GO" id="GO:0042866">
    <property type="term" value="P:pyruvate biosynthetic process"/>
    <property type="evidence" value="ECO:0007669"/>
    <property type="project" value="UniProtKB-UniRule"/>
</dbReference>
<dbReference type="GO" id="GO:0006744">
    <property type="term" value="P:ubiquinone biosynthetic process"/>
    <property type="evidence" value="ECO:0007669"/>
    <property type="project" value="UniProtKB-UniRule"/>
</dbReference>
<dbReference type="FunFam" id="3.40.1410.10:FF:000045">
    <property type="entry name" value="Probable chorismate pyruvate-lyase"/>
    <property type="match status" value="1"/>
</dbReference>
<dbReference type="Gene3D" id="3.40.1410.10">
    <property type="entry name" value="Chorismate lyase-like"/>
    <property type="match status" value="1"/>
</dbReference>
<dbReference type="HAMAP" id="MF_01632">
    <property type="entry name" value="UbiC"/>
    <property type="match status" value="1"/>
</dbReference>
<dbReference type="InterPro" id="IPR007440">
    <property type="entry name" value="Chorismate--pyruvate_lyase"/>
</dbReference>
<dbReference type="InterPro" id="IPR028978">
    <property type="entry name" value="Chorismate_lyase_/UTRA_dom_sf"/>
</dbReference>
<dbReference type="PANTHER" id="PTHR38683">
    <property type="entry name" value="CHORISMATE PYRUVATE-LYASE"/>
    <property type="match status" value="1"/>
</dbReference>
<dbReference type="PANTHER" id="PTHR38683:SF1">
    <property type="entry name" value="CHORISMATE PYRUVATE-LYASE"/>
    <property type="match status" value="1"/>
</dbReference>
<dbReference type="Pfam" id="PF04345">
    <property type="entry name" value="Chor_lyase"/>
    <property type="match status" value="1"/>
</dbReference>
<dbReference type="SUPFAM" id="SSF64288">
    <property type="entry name" value="Chorismate lyase-like"/>
    <property type="match status" value="1"/>
</dbReference>
<name>UBIC_SHESA</name>
<organism>
    <name type="scientific">Shewanella sp. (strain ANA-3)</name>
    <dbReference type="NCBI Taxonomy" id="94122"/>
    <lineage>
        <taxon>Bacteria</taxon>
        <taxon>Pseudomonadati</taxon>
        <taxon>Pseudomonadota</taxon>
        <taxon>Gammaproteobacteria</taxon>
        <taxon>Alteromonadales</taxon>
        <taxon>Shewanellaceae</taxon>
        <taxon>Shewanella</taxon>
    </lineage>
</organism>
<feature type="chain" id="PRO_0000292080" description="Probable chorismate pyruvate-lyase">
    <location>
        <begin position="1"/>
        <end position="187"/>
    </location>
</feature>
<feature type="binding site" evidence="1">
    <location>
        <position position="77"/>
    </location>
    <ligand>
        <name>substrate</name>
    </ligand>
</feature>
<feature type="binding site" evidence="1">
    <location>
        <position position="115"/>
    </location>
    <ligand>
        <name>substrate</name>
    </ligand>
</feature>
<feature type="binding site" evidence="1">
    <location>
        <position position="174"/>
    </location>
    <ligand>
        <name>substrate</name>
    </ligand>
</feature>
<sequence length="187" mass="21134">MNVTSLSFPYGESIQWFCADNAKNLPSSPLKEWLLAPGSLTQKLKGCCDKFEVKILGEGQCAPLEGEYPKQNAVWVREVLLCLDSVPWVFARTLIPQSLLSTRQADFLGLGTRPLGELLFSQDSFVPGRIEIARFTTDSRLAQLAQSLAQNVEHELWGRRRYFHHDEEEMFVSEMFLPAAVQAMARL</sequence>